<accession>P15270</accession>
<accession>Q54ZS6</accession>
<protein>
    <recommendedName>
        <fullName>Spore coat protein SP60</fullName>
    </recommendedName>
</protein>
<name>SP60_DICDI</name>
<evidence type="ECO:0000256" key="1">
    <source>
        <dbReference type="SAM" id="MobiDB-lite"/>
    </source>
</evidence>
<evidence type="ECO:0000269" key="2">
    <source>
    </source>
</evidence>
<evidence type="ECO:0000305" key="3"/>
<reference key="1">
    <citation type="journal article" date="1989" name="Mol. Cell. Biol.">
        <title>Spore coat genes SP60 and SP70 of Dictyostelium discoideum.</title>
        <authorList>
            <person name="Fosnaugh K.L."/>
            <person name="Loomis W.F."/>
        </authorList>
    </citation>
    <scope>NUCLEOTIDE SEQUENCE [GENOMIC DNA]</scope>
</reference>
<reference key="2">
    <citation type="journal article" date="2002" name="Nature">
        <title>Sequence and analysis of chromosome 2 of Dictyostelium discoideum.</title>
        <authorList>
            <person name="Gloeckner G."/>
            <person name="Eichinger L."/>
            <person name="Szafranski K."/>
            <person name="Pachebat J.A."/>
            <person name="Bankier A.T."/>
            <person name="Dear P.H."/>
            <person name="Lehmann R."/>
            <person name="Baumgart C."/>
            <person name="Parra G."/>
            <person name="Abril J.F."/>
            <person name="Guigo R."/>
            <person name="Kumpf K."/>
            <person name="Tunggal B."/>
            <person name="Cox E.C."/>
            <person name="Quail M.A."/>
            <person name="Platzer M."/>
            <person name="Rosenthal A."/>
            <person name="Noegel A.A."/>
        </authorList>
    </citation>
    <scope>NUCLEOTIDE SEQUENCE [LARGE SCALE GENOMIC DNA]</scope>
    <source>
        <strain>AX4</strain>
    </source>
</reference>
<reference key="3">
    <citation type="journal article" date="2005" name="Nature">
        <title>The genome of the social amoeba Dictyostelium discoideum.</title>
        <authorList>
            <person name="Eichinger L."/>
            <person name="Pachebat J.A."/>
            <person name="Gloeckner G."/>
            <person name="Rajandream M.A."/>
            <person name="Sucgang R."/>
            <person name="Berriman M."/>
            <person name="Song J."/>
            <person name="Olsen R."/>
            <person name="Szafranski K."/>
            <person name="Xu Q."/>
            <person name="Tunggal B."/>
            <person name="Kummerfeld S."/>
            <person name="Madera M."/>
            <person name="Konfortov B.A."/>
            <person name="Rivero F."/>
            <person name="Bankier A.T."/>
            <person name="Lehmann R."/>
            <person name="Hamlin N."/>
            <person name="Davies R."/>
            <person name="Gaudet P."/>
            <person name="Fey P."/>
            <person name="Pilcher K."/>
            <person name="Chen G."/>
            <person name="Saunders D."/>
            <person name="Sodergren E.J."/>
            <person name="Davis P."/>
            <person name="Kerhornou A."/>
            <person name="Nie X."/>
            <person name="Hall N."/>
            <person name="Anjard C."/>
            <person name="Hemphill L."/>
            <person name="Bason N."/>
            <person name="Farbrother P."/>
            <person name="Desany B."/>
            <person name="Just E."/>
            <person name="Morio T."/>
            <person name="Rost R."/>
            <person name="Churcher C.M."/>
            <person name="Cooper J."/>
            <person name="Haydock S."/>
            <person name="van Driessche N."/>
            <person name="Cronin A."/>
            <person name="Goodhead I."/>
            <person name="Muzny D.M."/>
            <person name="Mourier T."/>
            <person name="Pain A."/>
            <person name="Lu M."/>
            <person name="Harper D."/>
            <person name="Lindsay R."/>
            <person name="Hauser H."/>
            <person name="James K.D."/>
            <person name="Quiles M."/>
            <person name="Madan Babu M."/>
            <person name="Saito T."/>
            <person name="Buchrieser C."/>
            <person name="Wardroper A."/>
            <person name="Felder M."/>
            <person name="Thangavelu M."/>
            <person name="Johnson D."/>
            <person name="Knights A."/>
            <person name="Loulseged H."/>
            <person name="Mungall K.L."/>
            <person name="Oliver K."/>
            <person name="Price C."/>
            <person name="Quail M.A."/>
            <person name="Urushihara H."/>
            <person name="Hernandez J."/>
            <person name="Rabbinowitsch E."/>
            <person name="Steffen D."/>
            <person name="Sanders M."/>
            <person name="Ma J."/>
            <person name="Kohara Y."/>
            <person name="Sharp S."/>
            <person name="Simmonds M.N."/>
            <person name="Spiegler S."/>
            <person name="Tivey A."/>
            <person name="Sugano S."/>
            <person name="White B."/>
            <person name="Walker D."/>
            <person name="Woodward J.R."/>
            <person name="Winckler T."/>
            <person name="Tanaka Y."/>
            <person name="Shaulsky G."/>
            <person name="Schleicher M."/>
            <person name="Weinstock G.M."/>
            <person name="Rosenthal A."/>
            <person name="Cox E.C."/>
            <person name="Chisholm R.L."/>
            <person name="Gibbs R.A."/>
            <person name="Loomis W.F."/>
            <person name="Platzer M."/>
            <person name="Kay R.R."/>
            <person name="Williams J.G."/>
            <person name="Dear P.H."/>
            <person name="Noegel A.A."/>
            <person name="Barrell B.G."/>
            <person name="Kuspa A."/>
        </authorList>
    </citation>
    <scope>NUCLEOTIDE SEQUENCE [LARGE SCALE GENOMIC DNA]</scope>
    <source>
        <strain>AX4</strain>
    </source>
</reference>
<reference key="4">
    <citation type="journal article" date="1990" name="Genes Dev.">
        <title>A spatial gradient of expression of a cAMP-regulated prespore cell-type-specific gene in Dictyostelium.</title>
        <authorList>
            <person name="Haberstroh L."/>
            <person name="Firtel R.A."/>
        </authorList>
    </citation>
    <scope>NUCLEOTIDE SEQUENCE [GENOMIC DNA] OF 1-185</scope>
</reference>
<reference key="5">
    <citation type="journal article" date="1990" name="Mol. Microbiol.">
        <title>Developmental expression and characterization of the gene encoding spore coat protein SP60 in Dictyostelium discoideum.</title>
        <authorList>
            <person name="Widdowson D.C.C."/>
            <person name="Proffitt J.A."/>
            <person name="Jagger P.S."/>
            <person name="Richards A.J."/>
            <person name="Hames B.D."/>
        </authorList>
    </citation>
    <scope>SEQUENCE REVISION</scope>
</reference>
<reference key="6">
    <citation type="journal article" date="1986" name="Biochem. Biophys. Res. Commun.">
        <title>Hexapeptide repeat structure in Dictyostelium spore coat protein.</title>
        <authorList>
            <person name="Dowds B.C."/>
            <person name="Loomis W.F."/>
        </authorList>
    </citation>
    <scope>PROTEIN SEQUENCE OF 24-45</scope>
</reference>
<dbReference type="EMBL" id="X51892">
    <property type="protein sequence ID" value="CAA36174.1"/>
    <property type="molecule type" value="Genomic_DNA"/>
</dbReference>
<dbReference type="EMBL" id="M26239">
    <property type="protein sequence ID" value="AAA33251.1"/>
    <property type="molecule type" value="Genomic_DNA"/>
</dbReference>
<dbReference type="EMBL" id="AAFI02000019">
    <property type="protein sequence ID" value="EAL68756.1"/>
    <property type="molecule type" value="Genomic_DNA"/>
</dbReference>
<dbReference type="EMBL" id="X52105">
    <property type="protein sequence ID" value="CAA36325.1"/>
    <property type="molecule type" value="Genomic_DNA"/>
</dbReference>
<dbReference type="PIR" id="S11676">
    <property type="entry name" value="S11676"/>
</dbReference>
<dbReference type="RefSeq" id="XP_642790.1">
    <property type="nucleotide sequence ID" value="XM_637698.1"/>
</dbReference>
<dbReference type="STRING" id="44689.P15270"/>
<dbReference type="PaxDb" id="44689-DDB0185189"/>
<dbReference type="EnsemblProtists" id="EAL68756">
    <property type="protein sequence ID" value="EAL68756"/>
    <property type="gene ID" value="DDB_G0277141"/>
</dbReference>
<dbReference type="GeneID" id="8620983"/>
<dbReference type="KEGG" id="ddi:DDB_G0277141"/>
<dbReference type="dictyBase" id="DDB_G0277141">
    <property type="gene designation" value="cotC"/>
</dbReference>
<dbReference type="VEuPathDB" id="AmoebaDB:DDB_G0277141"/>
<dbReference type="HOGENOM" id="CLU_648001_0_0_1"/>
<dbReference type="InParanoid" id="P15270"/>
<dbReference type="PhylomeDB" id="P15270"/>
<dbReference type="PRO" id="PR:P15270"/>
<dbReference type="Proteomes" id="UP000002195">
    <property type="component" value="Chromosome 2"/>
</dbReference>
<dbReference type="GO" id="GO:0090665">
    <property type="term" value="C:glycoprotein complex"/>
    <property type="evidence" value="ECO:0000314"/>
    <property type="project" value="dictyBase"/>
</dbReference>
<dbReference type="GO" id="GO:0005886">
    <property type="term" value="C:plasma membrane"/>
    <property type="evidence" value="ECO:0000304"/>
    <property type="project" value="dictyBase"/>
</dbReference>
<dbReference type="GO" id="GO:0031160">
    <property type="term" value="C:spore wall"/>
    <property type="evidence" value="ECO:0000314"/>
    <property type="project" value="dictyBase"/>
</dbReference>
<dbReference type="GO" id="GO:0003677">
    <property type="term" value="F:DNA binding"/>
    <property type="evidence" value="ECO:0000250"/>
    <property type="project" value="dictyBase"/>
</dbReference>
<dbReference type="GO" id="GO:0031152">
    <property type="term" value="P:aggregation involved in sorocarp development"/>
    <property type="evidence" value="ECO:0000304"/>
    <property type="project" value="dictyBase"/>
</dbReference>
<dbReference type="GO" id="GO:0042244">
    <property type="term" value="P:spore wall assembly"/>
    <property type="evidence" value="ECO:0000315"/>
    <property type="project" value="dictyBase"/>
</dbReference>
<dbReference type="GO" id="GO:0030435">
    <property type="term" value="P:sporulation resulting in formation of a cellular spore"/>
    <property type="evidence" value="ECO:0000315"/>
    <property type="project" value="dictyBase"/>
</dbReference>
<dbReference type="InterPro" id="IPR003645">
    <property type="entry name" value="Fol_N"/>
</dbReference>
<dbReference type="SMART" id="SM00274">
    <property type="entry name" value="FOLN"/>
    <property type="match status" value="6"/>
</dbReference>
<feature type="signal peptide" evidence="2">
    <location>
        <begin position="1"/>
        <end position="23"/>
    </location>
</feature>
<feature type="chain" id="PRO_0000032670" description="Spore coat protein SP60">
    <location>
        <begin position="24"/>
        <end position="424"/>
    </location>
</feature>
<feature type="domain" description="Follistatin-like 1">
    <location>
        <begin position="52"/>
        <end position="74"/>
    </location>
</feature>
<feature type="domain" description="Follistatin-like 2">
    <location>
        <begin position="85"/>
        <end position="109"/>
    </location>
</feature>
<feature type="domain" description="Follistatin-like 3">
    <location>
        <begin position="117"/>
        <end position="139"/>
    </location>
</feature>
<feature type="domain" description="Follistatin-like 4">
    <location>
        <begin position="184"/>
        <end position="206"/>
    </location>
</feature>
<feature type="domain" description="Follistatin-like 5">
    <location>
        <begin position="215"/>
        <end position="234"/>
    </location>
</feature>
<feature type="domain" description="Follistatin-like 6">
    <location>
        <begin position="299"/>
        <end position="322"/>
    </location>
</feature>
<feature type="region of interest" description="Disordered" evidence="1">
    <location>
        <begin position="330"/>
        <end position="424"/>
    </location>
</feature>
<feature type="compositionally biased region" description="Acidic residues" evidence="1">
    <location>
        <begin position="335"/>
        <end position="357"/>
    </location>
</feature>
<feature type="compositionally biased region" description="Acidic residues" evidence="1">
    <location>
        <begin position="365"/>
        <end position="424"/>
    </location>
</feature>
<feature type="sequence conflict" description="In Ref. 6; AA sequence." evidence="3" ref="6">
    <original>N</original>
    <variation>D</variation>
    <location>
        <position position="41"/>
    </location>
</feature>
<sequence length="424" mass="49306">MKILSLLVVGALCMGGKVYGEVNGDWNNNGDWNNNGDWNNNGDWNNNGPILDCSTLQCPPRYHCEVNNGNRQCVEDQITLPPFDKCDNVHCPKGFNCKYDWEKDLALCVPWRPYPPVCRTRCPEGHECKVDEWGKECCVKIKCDDICDLRCPKGHECKIKHDGSKCCVRSWRPRPHKPHPRPPICRLRCPPGHECKHDEHGKECCVKKRHHDRCDLKCKRGYECKIKHDGSKCCVKRTPKRPCCKPNSCARDEKCVATKDRIICVKPTCDNTRCPPNYHCICGDKIDGVKCVPDCKKARCDDVECPDFHRCVERRGGILSCEFDPPRQPRSLDWAENENDDRDYDDRDYDDDEYDGDYDGRDGDYDGDYDGDYDDDNYYGDDDYDNDWDNDNDWGNDWDNDWDNEDGDNWNDDDFQDANDEWDY</sequence>
<gene>
    <name type="primary">cotC</name>
    <name type="synonym">SP60</name>
    <name type="ORF">DDB_G0277141</name>
</gene>
<organism>
    <name type="scientific">Dictyostelium discoideum</name>
    <name type="common">Social amoeba</name>
    <dbReference type="NCBI Taxonomy" id="44689"/>
    <lineage>
        <taxon>Eukaryota</taxon>
        <taxon>Amoebozoa</taxon>
        <taxon>Evosea</taxon>
        <taxon>Eumycetozoa</taxon>
        <taxon>Dictyostelia</taxon>
        <taxon>Dictyosteliales</taxon>
        <taxon>Dictyosteliaceae</taxon>
        <taxon>Dictyostelium</taxon>
    </lineage>
</organism>
<keyword id="KW-0903">Direct protein sequencing</keyword>
<keyword id="KW-1185">Reference proteome</keyword>
<keyword id="KW-0677">Repeat</keyword>
<keyword id="KW-0732">Signal</keyword>
<keyword id="KW-0749">Sporulation</keyword>
<proteinExistence type="evidence at protein level"/>